<sequence>MKFRSTALVKGFRQSAPYVNAHRDKTVVIMLGGEAIADPNFANIVNDIALLNSLGLRIVIVYGTRPQMRSLLKQTEHHAPFHKGIRITDEQTLELVKQIAGQLQLDITARLSMSLNNTPMAGAQINVISGNFVIAQPLGVDDGIDYCHSGRVRRIDTQGINRMLDQQSIVLLGPVASSVTGECFNLLSEDVATQLAIRLNADKLIGFCSEQGVLNEKGQILAELFPSEAEEILQRLEKELTPENGKLTGTMRFLKGAISACKAGVPRSHLISYKEDGALIQELFSFDGIGTQVVMASSEQVRDAEIDDIGGILDLIRPLEEEGILVRRSREQLEQEIAQFTIIEKDGLVIACAALYPFPEEGMAEMGCVAVHPDYRDGDRGVTLLNRLRSKAKQFKLSQLFVLTTRSLHWFREQGFIEVDVSHLPIKKQKLYNFQRKSKILVLKGL</sequence>
<proteinExistence type="inferred from homology"/>
<reference key="1">
    <citation type="journal article" date="2005" name="Proc. Natl. Acad. Sci. U.S.A.">
        <title>Complete genome sequence of Vibrio fischeri: a symbiotic bacterium with pathogenic congeners.</title>
        <authorList>
            <person name="Ruby E.G."/>
            <person name="Urbanowski M."/>
            <person name="Campbell J."/>
            <person name="Dunn A."/>
            <person name="Faini M."/>
            <person name="Gunsalus R."/>
            <person name="Lostroh P."/>
            <person name="Lupp C."/>
            <person name="McCann J."/>
            <person name="Millikan D."/>
            <person name="Schaefer A."/>
            <person name="Stabb E."/>
            <person name="Stevens A."/>
            <person name="Visick K."/>
            <person name="Whistler C."/>
            <person name="Greenberg E.P."/>
        </authorList>
    </citation>
    <scope>NUCLEOTIDE SEQUENCE [LARGE SCALE GENOMIC DNA]</scope>
    <source>
        <strain>ATCC 700601 / ES114</strain>
    </source>
</reference>
<dbReference type="EC" id="2.3.1.1" evidence="1"/>
<dbReference type="EMBL" id="CP000020">
    <property type="protein sequence ID" value="AAW85080.1"/>
    <property type="molecule type" value="Genomic_DNA"/>
</dbReference>
<dbReference type="RefSeq" id="WP_011261338.1">
    <property type="nucleotide sequence ID" value="NC_006840.2"/>
</dbReference>
<dbReference type="RefSeq" id="YP_203968.1">
    <property type="nucleotide sequence ID" value="NC_006840.2"/>
</dbReference>
<dbReference type="SMR" id="Q5E7B6"/>
<dbReference type="STRING" id="312309.VF_0585"/>
<dbReference type="EnsemblBacteria" id="AAW85080">
    <property type="protein sequence ID" value="AAW85080"/>
    <property type="gene ID" value="VF_0585"/>
</dbReference>
<dbReference type="GeneID" id="54163238"/>
<dbReference type="KEGG" id="vfi:VF_0585"/>
<dbReference type="PATRIC" id="fig|312309.11.peg.577"/>
<dbReference type="eggNOG" id="COG0548">
    <property type="taxonomic scope" value="Bacteria"/>
</dbReference>
<dbReference type="eggNOG" id="COG1246">
    <property type="taxonomic scope" value="Bacteria"/>
</dbReference>
<dbReference type="HOGENOM" id="CLU_024773_0_0_6"/>
<dbReference type="OrthoDB" id="9802238at2"/>
<dbReference type="UniPathway" id="UPA00068">
    <property type="reaction ID" value="UER00106"/>
</dbReference>
<dbReference type="Proteomes" id="UP000000537">
    <property type="component" value="Chromosome I"/>
</dbReference>
<dbReference type="GO" id="GO:0005737">
    <property type="term" value="C:cytoplasm"/>
    <property type="evidence" value="ECO:0007669"/>
    <property type="project" value="UniProtKB-SubCell"/>
</dbReference>
<dbReference type="GO" id="GO:0004042">
    <property type="term" value="F:L-glutamate N-acetyltransferase activity"/>
    <property type="evidence" value="ECO:0007669"/>
    <property type="project" value="UniProtKB-UniRule"/>
</dbReference>
<dbReference type="GO" id="GO:0006526">
    <property type="term" value="P:L-arginine biosynthetic process"/>
    <property type="evidence" value="ECO:0007669"/>
    <property type="project" value="UniProtKB-UniRule"/>
</dbReference>
<dbReference type="CDD" id="cd04237">
    <property type="entry name" value="AAK_NAGS-ABP"/>
    <property type="match status" value="1"/>
</dbReference>
<dbReference type="CDD" id="cd04301">
    <property type="entry name" value="NAT_SF"/>
    <property type="match status" value="1"/>
</dbReference>
<dbReference type="FunFam" id="3.40.1160.10:FF:000005">
    <property type="entry name" value="Amino-acid acetyltransferase"/>
    <property type="match status" value="1"/>
</dbReference>
<dbReference type="Gene3D" id="3.40.630.30">
    <property type="match status" value="1"/>
</dbReference>
<dbReference type="Gene3D" id="3.40.1160.10">
    <property type="entry name" value="Acetylglutamate kinase-like"/>
    <property type="match status" value="1"/>
</dbReference>
<dbReference type="HAMAP" id="MF_01105">
    <property type="entry name" value="N_acetyl_glu_synth"/>
    <property type="match status" value="1"/>
</dbReference>
<dbReference type="InterPro" id="IPR036393">
    <property type="entry name" value="AceGlu_kinase-like_sf"/>
</dbReference>
<dbReference type="InterPro" id="IPR016181">
    <property type="entry name" value="Acyl_CoA_acyltransferase"/>
</dbReference>
<dbReference type="InterPro" id="IPR001048">
    <property type="entry name" value="Asp/Glu/Uridylate_kinase"/>
</dbReference>
<dbReference type="InterPro" id="IPR000182">
    <property type="entry name" value="GNAT_dom"/>
</dbReference>
<dbReference type="InterPro" id="IPR033719">
    <property type="entry name" value="NAGS_kin"/>
</dbReference>
<dbReference type="InterPro" id="IPR010167">
    <property type="entry name" value="NH2A_AcTrfase"/>
</dbReference>
<dbReference type="NCBIfam" id="TIGR01890">
    <property type="entry name" value="N-Ac-Glu-synth"/>
    <property type="match status" value="1"/>
</dbReference>
<dbReference type="NCBIfam" id="NF003641">
    <property type="entry name" value="PRK05279.1"/>
    <property type="match status" value="1"/>
</dbReference>
<dbReference type="PANTHER" id="PTHR30602">
    <property type="entry name" value="AMINO-ACID ACETYLTRANSFERASE"/>
    <property type="match status" value="1"/>
</dbReference>
<dbReference type="PANTHER" id="PTHR30602:SF12">
    <property type="entry name" value="AMINO-ACID ACETYLTRANSFERASE NAGS1, CHLOROPLASTIC-RELATED"/>
    <property type="match status" value="1"/>
</dbReference>
<dbReference type="Pfam" id="PF00696">
    <property type="entry name" value="AA_kinase"/>
    <property type="match status" value="1"/>
</dbReference>
<dbReference type="Pfam" id="PF00583">
    <property type="entry name" value="Acetyltransf_1"/>
    <property type="match status" value="1"/>
</dbReference>
<dbReference type="PIRSF" id="PIRSF000423">
    <property type="entry name" value="ArgA"/>
    <property type="match status" value="1"/>
</dbReference>
<dbReference type="SUPFAM" id="SSF55729">
    <property type="entry name" value="Acyl-CoA N-acyltransferases (Nat)"/>
    <property type="match status" value="1"/>
</dbReference>
<dbReference type="SUPFAM" id="SSF53633">
    <property type="entry name" value="Carbamate kinase-like"/>
    <property type="match status" value="1"/>
</dbReference>
<dbReference type="PROSITE" id="PS51186">
    <property type="entry name" value="GNAT"/>
    <property type="match status" value="1"/>
</dbReference>
<keyword id="KW-0012">Acyltransferase</keyword>
<keyword id="KW-0028">Amino-acid biosynthesis</keyword>
<keyword id="KW-0055">Arginine biosynthesis</keyword>
<keyword id="KW-0963">Cytoplasm</keyword>
<keyword id="KW-1185">Reference proteome</keyword>
<keyword id="KW-0808">Transferase</keyword>
<gene>
    <name evidence="1" type="primary">argA</name>
    <name type="ordered locus">VF_0585</name>
</gene>
<protein>
    <recommendedName>
        <fullName evidence="1">Amino-acid acetyltransferase</fullName>
        <ecNumber evidence="1">2.3.1.1</ecNumber>
    </recommendedName>
    <alternativeName>
        <fullName evidence="1">N-acetylglutamate synthase</fullName>
        <shortName evidence="1">AGS</shortName>
        <shortName evidence="1">NAGS</shortName>
    </alternativeName>
</protein>
<name>ARGA_ALIF1</name>
<feature type="chain" id="PRO_1000137053" description="Amino-acid acetyltransferase">
    <location>
        <begin position="1"/>
        <end position="446"/>
    </location>
</feature>
<feature type="domain" description="N-acetyltransferase" evidence="1">
    <location>
        <begin position="299"/>
        <end position="438"/>
    </location>
</feature>
<comment type="catalytic activity">
    <reaction evidence="1">
        <text>L-glutamate + acetyl-CoA = N-acetyl-L-glutamate + CoA + H(+)</text>
        <dbReference type="Rhea" id="RHEA:24292"/>
        <dbReference type="ChEBI" id="CHEBI:15378"/>
        <dbReference type="ChEBI" id="CHEBI:29985"/>
        <dbReference type="ChEBI" id="CHEBI:44337"/>
        <dbReference type="ChEBI" id="CHEBI:57287"/>
        <dbReference type="ChEBI" id="CHEBI:57288"/>
        <dbReference type="EC" id="2.3.1.1"/>
    </reaction>
</comment>
<comment type="pathway">
    <text evidence="1">Amino-acid biosynthesis; L-arginine biosynthesis; N(2)-acetyl-L-ornithine from L-glutamate: step 1/4.</text>
</comment>
<comment type="subcellular location">
    <subcellularLocation>
        <location evidence="1">Cytoplasm</location>
    </subcellularLocation>
</comment>
<comment type="similarity">
    <text evidence="1">Belongs to the acetyltransferase family. ArgA subfamily.</text>
</comment>
<accession>Q5E7B6</accession>
<organism>
    <name type="scientific">Aliivibrio fischeri (strain ATCC 700601 / ES114)</name>
    <name type="common">Vibrio fischeri</name>
    <dbReference type="NCBI Taxonomy" id="312309"/>
    <lineage>
        <taxon>Bacteria</taxon>
        <taxon>Pseudomonadati</taxon>
        <taxon>Pseudomonadota</taxon>
        <taxon>Gammaproteobacteria</taxon>
        <taxon>Vibrionales</taxon>
        <taxon>Vibrionaceae</taxon>
        <taxon>Aliivibrio</taxon>
    </lineage>
</organism>
<evidence type="ECO:0000255" key="1">
    <source>
        <dbReference type="HAMAP-Rule" id="MF_01105"/>
    </source>
</evidence>